<organism>
    <name type="scientific">Escherichia coli O17:K52:H18 (strain UMN026 / ExPEC)</name>
    <dbReference type="NCBI Taxonomy" id="585056"/>
    <lineage>
        <taxon>Bacteria</taxon>
        <taxon>Pseudomonadati</taxon>
        <taxon>Pseudomonadota</taxon>
        <taxon>Gammaproteobacteria</taxon>
        <taxon>Enterobacterales</taxon>
        <taxon>Enterobacteriaceae</taxon>
        <taxon>Escherichia</taxon>
    </lineage>
</organism>
<reference key="1">
    <citation type="journal article" date="2009" name="PLoS Genet.">
        <title>Organised genome dynamics in the Escherichia coli species results in highly diverse adaptive paths.</title>
        <authorList>
            <person name="Touchon M."/>
            <person name="Hoede C."/>
            <person name="Tenaillon O."/>
            <person name="Barbe V."/>
            <person name="Baeriswyl S."/>
            <person name="Bidet P."/>
            <person name="Bingen E."/>
            <person name="Bonacorsi S."/>
            <person name="Bouchier C."/>
            <person name="Bouvet O."/>
            <person name="Calteau A."/>
            <person name="Chiapello H."/>
            <person name="Clermont O."/>
            <person name="Cruveiller S."/>
            <person name="Danchin A."/>
            <person name="Diard M."/>
            <person name="Dossat C."/>
            <person name="Karoui M.E."/>
            <person name="Frapy E."/>
            <person name="Garry L."/>
            <person name="Ghigo J.M."/>
            <person name="Gilles A.M."/>
            <person name="Johnson J."/>
            <person name="Le Bouguenec C."/>
            <person name="Lescat M."/>
            <person name="Mangenot S."/>
            <person name="Martinez-Jehanne V."/>
            <person name="Matic I."/>
            <person name="Nassif X."/>
            <person name="Oztas S."/>
            <person name="Petit M.A."/>
            <person name="Pichon C."/>
            <person name="Rouy Z."/>
            <person name="Ruf C.S."/>
            <person name="Schneider D."/>
            <person name="Tourret J."/>
            <person name="Vacherie B."/>
            <person name="Vallenet D."/>
            <person name="Medigue C."/>
            <person name="Rocha E.P.C."/>
            <person name="Denamur E."/>
        </authorList>
    </citation>
    <scope>NUCLEOTIDE SEQUENCE [LARGE SCALE GENOMIC DNA]</scope>
    <source>
        <strain>UMN026 / ExPEC</strain>
    </source>
</reference>
<protein>
    <recommendedName>
        <fullName evidence="1">Nucleoid occlusion factor SlmA</fullName>
    </recommendedName>
</protein>
<feature type="chain" id="PRO_1000188386" description="Nucleoid occlusion factor SlmA">
    <location>
        <begin position="1"/>
        <end position="198"/>
    </location>
</feature>
<feature type="domain" description="HTH tetR-type" evidence="1">
    <location>
        <begin position="10"/>
        <end position="70"/>
    </location>
</feature>
<feature type="DNA-binding region" description="H-T-H motif" evidence="1">
    <location>
        <begin position="33"/>
        <end position="52"/>
    </location>
</feature>
<feature type="coiled-coil region" evidence="1">
    <location>
        <begin position="117"/>
        <end position="144"/>
    </location>
</feature>
<evidence type="ECO:0000255" key="1">
    <source>
        <dbReference type="HAMAP-Rule" id="MF_01839"/>
    </source>
</evidence>
<keyword id="KW-0131">Cell cycle</keyword>
<keyword id="KW-0132">Cell division</keyword>
<keyword id="KW-0175">Coiled coil</keyword>
<keyword id="KW-0963">Cytoplasm</keyword>
<keyword id="KW-0238">DNA-binding</keyword>
<dbReference type="EMBL" id="CU928163">
    <property type="protein sequence ID" value="CAR15297.1"/>
    <property type="molecule type" value="Genomic_DNA"/>
</dbReference>
<dbReference type="RefSeq" id="WP_000818601.1">
    <property type="nucleotide sequence ID" value="NC_011751.1"/>
</dbReference>
<dbReference type="RefSeq" id="YP_002414794.1">
    <property type="nucleotide sequence ID" value="NC_011751.1"/>
</dbReference>
<dbReference type="SMR" id="B7NEU5"/>
<dbReference type="STRING" id="585056.ECUMN_4156"/>
<dbReference type="GeneID" id="93778356"/>
<dbReference type="KEGG" id="eum:ECUMN_4156"/>
<dbReference type="PATRIC" id="fig|585056.7.peg.4330"/>
<dbReference type="HOGENOM" id="CLU_069356_5_0_6"/>
<dbReference type="Proteomes" id="UP000007097">
    <property type="component" value="Chromosome"/>
</dbReference>
<dbReference type="GO" id="GO:0043590">
    <property type="term" value="C:bacterial nucleoid"/>
    <property type="evidence" value="ECO:0007669"/>
    <property type="project" value="UniProtKB-UniRule"/>
</dbReference>
<dbReference type="GO" id="GO:0005737">
    <property type="term" value="C:cytoplasm"/>
    <property type="evidence" value="ECO:0007669"/>
    <property type="project" value="UniProtKB-UniRule"/>
</dbReference>
<dbReference type="GO" id="GO:0003700">
    <property type="term" value="F:DNA-binding transcription factor activity"/>
    <property type="evidence" value="ECO:0007669"/>
    <property type="project" value="TreeGrafter"/>
</dbReference>
<dbReference type="GO" id="GO:0000976">
    <property type="term" value="F:transcription cis-regulatory region binding"/>
    <property type="evidence" value="ECO:0007669"/>
    <property type="project" value="TreeGrafter"/>
</dbReference>
<dbReference type="GO" id="GO:0051301">
    <property type="term" value="P:cell division"/>
    <property type="evidence" value="ECO:0007669"/>
    <property type="project" value="UniProtKB-KW"/>
</dbReference>
<dbReference type="GO" id="GO:0010974">
    <property type="term" value="P:negative regulation of division septum assembly"/>
    <property type="evidence" value="ECO:0007669"/>
    <property type="project" value="InterPro"/>
</dbReference>
<dbReference type="FunFam" id="1.10.357.10:FF:000002">
    <property type="entry name" value="Nucleoid occlusion factor SlmA"/>
    <property type="match status" value="1"/>
</dbReference>
<dbReference type="Gene3D" id="1.10.357.10">
    <property type="entry name" value="Tetracycline Repressor, domain 2"/>
    <property type="match status" value="1"/>
</dbReference>
<dbReference type="HAMAP" id="MF_01839">
    <property type="entry name" value="NO_factor_SlmA"/>
    <property type="match status" value="1"/>
</dbReference>
<dbReference type="InterPro" id="IPR023772">
    <property type="entry name" value="DNA-bd_HTH_TetR-type_CS"/>
</dbReference>
<dbReference type="InterPro" id="IPR009057">
    <property type="entry name" value="Homeodomain-like_sf"/>
</dbReference>
<dbReference type="InterPro" id="IPR050109">
    <property type="entry name" value="HTH-type_TetR-like_transc_reg"/>
</dbReference>
<dbReference type="InterPro" id="IPR001647">
    <property type="entry name" value="HTH_TetR"/>
</dbReference>
<dbReference type="InterPro" id="IPR023769">
    <property type="entry name" value="NO_SlmA"/>
</dbReference>
<dbReference type="InterPro" id="IPR054580">
    <property type="entry name" value="SlmA-like_C"/>
</dbReference>
<dbReference type="InterPro" id="IPR036271">
    <property type="entry name" value="Tet_transcr_reg_TetR-rel_C_sf"/>
</dbReference>
<dbReference type="NCBIfam" id="NF007015">
    <property type="entry name" value="PRK09480.1"/>
    <property type="match status" value="1"/>
</dbReference>
<dbReference type="PANTHER" id="PTHR30055">
    <property type="entry name" value="HTH-TYPE TRANSCRIPTIONAL REGULATOR RUTR"/>
    <property type="match status" value="1"/>
</dbReference>
<dbReference type="PANTHER" id="PTHR30055:SF183">
    <property type="entry name" value="NUCLEOID OCCLUSION FACTOR SLMA"/>
    <property type="match status" value="1"/>
</dbReference>
<dbReference type="Pfam" id="PF22276">
    <property type="entry name" value="SlmA-like_C"/>
    <property type="match status" value="1"/>
</dbReference>
<dbReference type="Pfam" id="PF00440">
    <property type="entry name" value="TetR_N"/>
    <property type="match status" value="1"/>
</dbReference>
<dbReference type="SUPFAM" id="SSF46689">
    <property type="entry name" value="Homeodomain-like"/>
    <property type="match status" value="1"/>
</dbReference>
<dbReference type="SUPFAM" id="SSF48498">
    <property type="entry name" value="Tetracyclin repressor-like, C-terminal domain"/>
    <property type="match status" value="1"/>
</dbReference>
<dbReference type="PROSITE" id="PS01081">
    <property type="entry name" value="HTH_TETR_1"/>
    <property type="match status" value="1"/>
</dbReference>
<dbReference type="PROSITE" id="PS50977">
    <property type="entry name" value="HTH_TETR_2"/>
    <property type="match status" value="1"/>
</dbReference>
<comment type="function">
    <text evidence="1">Required for nucleoid occlusion (NO) phenomenon, which prevents Z-ring formation and cell division over the nucleoid. Acts as a DNA-associated cell division inhibitor that binds simultaneously chromosomal DNA and FtsZ, and disrupts the assembly of FtsZ polymers. SlmA-DNA-binding sequences (SBS) are dispersed on non-Ter regions of the chromosome, preventing FtsZ polymerization at these regions.</text>
</comment>
<comment type="subunit">
    <text evidence="1">Homodimer. Interacts with FtsZ.</text>
</comment>
<comment type="subcellular location">
    <subcellularLocation>
        <location evidence="1">Cytoplasm</location>
        <location evidence="1">Nucleoid</location>
    </subcellularLocation>
</comment>
<comment type="similarity">
    <text evidence="1">Belongs to the nucleoid occlusion factor SlmA family.</text>
</comment>
<gene>
    <name evidence="1" type="primary">slmA</name>
    <name type="ordered locus">ECUMN_4156</name>
</gene>
<sequence>MAEKQTAKRNRREEILQSLALMLESSDGSQRITTAKLAASVGVSEAALYRHFPSKTRMFDSLIEFIEDSLITRINLILKDEKDTTARLRLIVLLLLGFGERNPGLTRILTGHALMFEQDRLQGRINQLFERIEAQLRQVLREKRMREGEGYTTDETLLASQILAFCEGMLSRFVRSEFKYRPTDDFDARWPLIAAQLQ</sequence>
<name>SLMA_ECOLU</name>
<accession>B7NEU5</accession>
<proteinExistence type="inferred from homology"/>